<accession>Q5DTU0</accession>
<accession>Q8BID1</accession>
<accession>Q8K2G0</accession>
<dbReference type="EMBL" id="AK087449">
    <property type="protein sequence ID" value="BAC39879.1"/>
    <property type="status" value="ALT_FRAME"/>
    <property type="molecule type" value="mRNA"/>
</dbReference>
<dbReference type="EMBL" id="AK220430">
    <property type="protein sequence ID" value="BAD90264.1"/>
    <property type="status" value="ALT_INIT"/>
    <property type="molecule type" value="mRNA"/>
</dbReference>
<dbReference type="EMBL" id="BC031515">
    <property type="protein sequence ID" value="AAH31515.1"/>
    <property type="status" value="ALT_INIT"/>
    <property type="molecule type" value="mRNA"/>
</dbReference>
<dbReference type="CCDS" id="CCDS50476.1">
    <molecule id="Q5DTU0-1"/>
</dbReference>
<dbReference type="CCDS" id="CCDS50477.1">
    <molecule id="Q5DTU0-2"/>
</dbReference>
<dbReference type="RefSeq" id="NP_001171267.1">
    <molecule id="Q5DTU0-2"/>
    <property type="nucleotide sequence ID" value="NM_001177796.1"/>
</dbReference>
<dbReference type="RefSeq" id="NP_001171268.1">
    <molecule id="Q5DTU0-1"/>
    <property type="nucleotide sequence ID" value="NM_001177797.1"/>
</dbReference>
<dbReference type="RefSeq" id="NP_666214.1">
    <property type="nucleotide sequence ID" value="NM_146102.2"/>
</dbReference>
<dbReference type="SMR" id="Q5DTU0"/>
<dbReference type="BioGRID" id="230491">
    <property type="interactions" value="1"/>
</dbReference>
<dbReference type="FunCoup" id="Q5DTU0">
    <property type="interactions" value="825"/>
</dbReference>
<dbReference type="STRING" id="10090.ENSMUSP00000107210"/>
<dbReference type="GlyGen" id="Q5DTU0">
    <property type="glycosylation" value="3 sites, 2 N-linked glycans (2 sites)"/>
</dbReference>
<dbReference type="iPTMnet" id="Q5DTU0"/>
<dbReference type="PhosphoSitePlus" id="Q5DTU0"/>
<dbReference type="jPOST" id="Q5DTU0"/>
<dbReference type="PaxDb" id="10090-ENSMUSP00000107210"/>
<dbReference type="PeptideAtlas" id="Q5DTU0"/>
<dbReference type="ProteomicsDB" id="285558">
    <molecule id="Q5DTU0-1"/>
</dbReference>
<dbReference type="ProteomicsDB" id="285559">
    <molecule id="Q5DTU0-2"/>
</dbReference>
<dbReference type="Antibodypedia" id="31934">
    <property type="antibodies" value="134 antibodies from 34 providers"/>
</dbReference>
<dbReference type="DNASU" id="226250"/>
<dbReference type="Ensembl" id="ENSMUST00000111584.9">
    <molecule id="Q5DTU0-2"/>
    <property type="protein sequence ID" value="ENSMUSP00000107210.3"/>
    <property type="gene ID" value="ENSMUSG00000025083.19"/>
</dbReference>
<dbReference type="Ensembl" id="ENSMUST00000118800.8">
    <molecule id="Q5DTU0-1"/>
    <property type="protein sequence ID" value="ENSMUSP00000113745.2"/>
    <property type="gene ID" value="ENSMUSG00000025083.19"/>
</dbReference>
<dbReference type="GeneID" id="226250"/>
<dbReference type="KEGG" id="mmu:226250"/>
<dbReference type="UCSC" id="uc008hzm.2">
    <molecule id="Q5DTU0-2"/>
    <property type="organism name" value="mouse"/>
</dbReference>
<dbReference type="UCSC" id="uc008hzn.2">
    <molecule id="Q5DTU0-1"/>
    <property type="organism name" value="mouse"/>
</dbReference>
<dbReference type="AGR" id="MGI:2147658"/>
<dbReference type="CTD" id="84632"/>
<dbReference type="MGI" id="MGI:2147658">
    <property type="gene designation" value="Afap1l2"/>
</dbReference>
<dbReference type="VEuPathDB" id="HostDB:ENSMUSG00000025083"/>
<dbReference type="eggNOG" id="ENOG502QQA8">
    <property type="taxonomic scope" value="Eukaryota"/>
</dbReference>
<dbReference type="GeneTree" id="ENSGT00950000183067"/>
<dbReference type="HOGENOM" id="CLU_014418_0_0_1"/>
<dbReference type="InParanoid" id="Q5DTU0"/>
<dbReference type="PhylomeDB" id="Q5DTU0"/>
<dbReference type="TreeFam" id="TF332622"/>
<dbReference type="BioGRID-ORCS" id="226250">
    <property type="hits" value="1 hit in 78 CRISPR screens"/>
</dbReference>
<dbReference type="ChiTaRS" id="Afap1l2">
    <property type="organism name" value="mouse"/>
</dbReference>
<dbReference type="PRO" id="PR:Q5DTU0"/>
<dbReference type="Proteomes" id="UP000000589">
    <property type="component" value="Chromosome 19"/>
</dbReference>
<dbReference type="RNAct" id="Q5DTU0">
    <property type="molecule type" value="protein"/>
</dbReference>
<dbReference type="Bgee" id="ENSMUSG00000025083">
    <property type="expression patterns" value="Expressed in placenta labyrinth and 218 other cell types or tissues"/>
</dbReference>
<dbReference type="ExpressionAtlas" id="Q5DTU0">
    <property type="expression patterns" value="baseline and differential"/>
</dbReference>
<dbReference type="GO" id="GO:0005829">
    <property type="term" value="C:cytosol"/>
    <property type="evidence" value="ECO:0007669"/>
    <property type="project" value="Ensembl"/>
</dbReference>
<dbReference type="GO" id="GO:0005886">
    <property type="term" value="C:plasma membrane"/>
    <property type="evidence" value="ECO:0007669"/>
    <property type="project" value="Ensembl"/>
</dbReference>
<dbReference type="GO" id="GO:0030296">
    <property type="term" value="F:protein tyrosine kinase activator activity"/>
    <property type="evidence" value="ECO:0007669"/>
    <property type="project" value="Ensembl"/>
</dbReference>
<dbReference type="GO" id="GO:0042169">
    <property type="term" value="F:SH2 domain binding"/>
    <property type="evidence" value="ECO:0007669"/>
    <property type="project" value="Ensembl"/>
</dbReference>
<dbReference type="GO" id="GO:0017124">
    <property type="term" value="F:SH3 domain binding"/>
    <property type="evidence" value="ECO:0007669"/>
    <property type="project" value="Ensembl"/>
</dbReference>
<dbReference type="GO" id="GO:0006954">
    <property type="term" value="P:inflammatory response"/>
    <property type="evidence" value="ECO:0007669"/>
    <property type="project" value="Ensembl"/>
</dbReference>
<dbReference type="GO" id="GO:0045893">
    <property type="term" value="P:positive regulation of DNA-templated transcription"/>
    <property type="evidence" value="ECO:0007669"/>
    <property type="project" value="Ensembl"/>
</dbReference>
<dbReference type="GO" id="GO:0045742">
    <property type="term" value="P:positive regulation of epidermal growth factor receptor signaling pathway"/>
    <property type="evidence" value="ECO:0007669"/>
    <property type="project" value="Ensembl"/>
</dbReference>
<dbReference type="GO" id="GO:0032757">
    <property type="term" value="P:positive regulation of interleukin-8 production"/>
    <property type="evidence" value="ECO:0007669"/>
    <property type="project" value="Ensembl"/>
</dbReference>
<dbReference type="GO" id="GO:0032675">
    <property type="term" value="P:regulation of interleukin-6 production"/>
    <property type="evidence" value="ECO:0007669"/>
    <property type="project" value="Ensembl"/>
</dbReference>
<dbReference type="GO" id="GO:0007346">
    <property type="term" value="P:regulation of mitotic cell cycle"/>
    <property type="evidence" value="ECO:0007669"/>
    <property type="project" value="Ensembl"/>
</dbReference>
<dbReference type="CDD" id="cd13306">
    <property type="entry name" value="PH1_AFAP"/>
    <property type="match status" value="1"/>
</dbReference>
<dbReference type="CDD" id="cd13307">
    <property type="entry name" value="PH2_AFAP"/>
    <property type="match status" value="1"/>
</dbReference>
<dbReference type="FunFam" id="2.30.29.30:FF:000020">
    <property type="entry name" value="Actin filament-associated protein 1-like 2 isoform 1"/>
    <property type="match status" value="1"/>
</dbReference>
<dbReference type="FunFam" id="2.30.29.30:FF:000171">
    <property type="entry name" value="Actin filament-associated protein 1-like 2 isoform 1"/>
    <property type="match status" value="1"/>
</dbReference>
<dbReference type="Gene3D" id="2.30.29.30">
    <property type="entry name" value="Pleckstrin-homology domain (PH domain)/Phosphotyrosine-binding domain (PTB)"/>
    <property type="match status" value="2"/>
</dbReference>
<dbReference type="InterPro" id="IPR030113">
    <property type="entry name" value="AFAP"/>
</dbReference>
<dbReference type="InterPro" id="IPR011993">
    <property type="entry name" value="PH-like_dom_sf"/>
</dbReference>
<dbReference type="InterPro" id="IPR001849">
    <property type="entry name" value="PH_domain"/>
</dbReference>
<dbReference type="PANTHER" id="PTHR14338">
    <property type="entry name" value="ACTIN FILAMENT-ASSOCIATED PROTEIN 1 FAMILY MEMBER"/>
    <property type="match status" value="1"/>
</dbReference>
<dbReference type="PANTHER" id="PTHR14338:SF4">
    <property type="entry name" value="ACTIN FILAMENT-ASSOCIATED PROTEIN 1-LIKE 2"/>
    <property type="match status" value="1"/>
</dbReference>
<dbReference type="Pfam" id="PF00169">
    <property type="entry name" value="PH"/>
    <property type="match status" value="2"/>
</dbReference>
<dbReference type="SMART" id="SM00233">
    <property type="entry name" value="PH"/>
    <property type="match status" value="2"/>
</dbReference>
<dbReference type="SUPFAM" id="SSF50729">
    <property type="entry name" value="PH domain-like"/>
    <property type="match status" value="2"/>
</dbReference>
<dbReference type="PROSITE" id="PS50003">
    <property type="entry name" value="PH_DOMAIN"/>
    <property type="match status" value="2"/>
</dbReference>
<organism>
    <name type="scientific">Mus musculus</name>
    <name type="common">Mouse</name>
    <dbReference type="NCBI Taxonomy" id="10090"/>
    <lineage>
        <taxon>Eukaryota</taxon>
        <taxon>Metazoa</taxon>
        <taxon>Chordata</taxon>
        <taxon>Craniata</taxon>
        <taxon>Vertebrata</taxon>
        <taxon>Euteleostomi</taxon>
        <taxon>Mammalia</taxon>
        <taxon>Eutheria</taxon>
        <taxon>Euarchontoglires</taxon>
        <taxon>Glires</taxon>
        <taxon>Rodentia</taxon>
        <taxon>Myomorpha</taxon>
        <taxon>Muroidea</taxon>
        <taxon>Muridae</taxon>
        <taxon>Murinae</taxon>
        <taxon>Mus</taxon>
        <taxon>Mus</taxon>
    </lineage>
</organism>
<protein>
    <recommendedName>
        <fullName>Actin filament-associated protein 1-like 2</fullName>
        <shortName>AFAP1-like protein 2</shortName>
    </recommendedName>
</protein>
<evidence type="ECO:0000250" key="1"/>
<evidence type="ECO:0000255" key="2"/>
<evidence type="ECO:0000255" key="3">
    <source>
        <dbReference type="PROSITE-ProRule" id="PRU00145"/>
    </source>
</evidence>
<evidence type="ECO:0000256" key="4">
    <source>
        <dbReference type="SAM" id="MobiDB-lite"/>
    </source>
</evidence>
<evidence type="ECO:0000303" key="5">
    <source>
    </source>
</evidence>
<evidence type="ECO:0000303" key="6">
    <source>
    </source>
</evidence>
<evidence type="ECO:0000305" key="7"/>
<evidence type="ECO:0007744" key="8">
    <source>
    </source>
</evidence>
<evidence type="ECO:0007744" key="9">
    <source>
    </source>
</evidence>
<feature type="chain" id="PRO_0000050806" description="Actin filament-associated protein 1-like 2">
    <location>
        <begin position="1"/>
        <end position="825"/>
    </location>
</feature>
<feature type="domain" description="PH 1" evidence="3">
    <location>
        <begin position="175"/>
        <end position="271"/>
    </location>
</feature>
<feature type="domain" description="PH 2" evidence="3">
    <location>
        <begin position="353"/>
        <end position="447"/>
    </location>
</feature>
<feature type="region of interest" description="Disordered" evidence="4">
    <location>
        <begin position="62"/>
        <end position="163"/>
    </location>
</feature>
<feature type="region of interest" description="Disordered" evidence="4">
    <location>
        <begin position="571"/>
        <end position="614"/>
    </location>
</feature>
<feature type="region of interest" description="Disordered" evidence="4">
    <location>
        <begin position="757"/>
        <end position="801"/>
    </location>
</feature>
<feature type="coiled-coil region" evidence="2">
    <location>
        <begin position="657"/>
        <end position="754"/>
    </location>
</feature>
<feature type="compositionally biased region" description="Polar residues" evidence="4">
    <location>
        <begin position="80"/>
        <end position="94"/>
    </location>
</feature>
<feature type="compositionally biased region" description="Low complexity" evidence="4">
    <location>
        <begin position="593"/>
        <end position="608"/>
    </location>
</feature>
<feature type="compositionally biased region" description="Polar residues" evidence="4">
    <location>
        <begin position="759"/>
        <end position="769"/>
    </location>
</feature>
<feature type="modified residue" description="Phosphotyrosine" evidence="8">
    <location>
        <position position="56"/>
    </location>
</feature>
<feature type="modified residue" description="Phosphothreonine" evidence="9">
    <location>
        <position position="113"/>
    </location>
</feature>
<feature type="modified residue" description="Phosphoserine" evidence="9">
    <location>
        <position position="408"/>
    </location>
</feature>
<feature type="modified residue" description="Phosphotyrosine" evidence="8">
    <location>
        <position position="413"/>
    </location>
</feature>
<feature type="modified residue" description="Phosphoserine" evidence="9">
    <location>
        <position position="484"/>
    </location>
</feature>
<feature type="splice variant" id="VSP_014257" description="In isoform 2." evidence="5 6">
    <original>MERYKA</original>
    <variation>MERYKAQGCCCLVVQRRILQVSAS</variation>
    <location>
        <begin position="1"/>
        <end position="6"/>
    </location>
</feature>
<feature type="sequence conflict" description="In Ref. 1; BAC39879." evidence="7" ref="1">
    <original>Y</original>
    <variation>N</variation>
    <location>
        <position position="124"/>
    </location>
</feature>
<proteinExistence type="evidence at protein level"/>
<gene>
    <name type="primary">Afap1l2</name>
    <name type="synonym">Kiaa1914</name>
</gene>
<sequence>MERYKALEQLLTELDDFLKVLDQENLSSAAVLKKSGLSELLRLYTKSSSSDEEYIYMNKVSVNGEQNSASPDKVPEEQGPLTNGEPSQHSSAPQKSLPDLPPPKMIPERKQPTVPKIESPEGYYEEAEPFDRSINEDGEAVSSSYESYDEDENSKGKAAPYQWPSPEASIELMRDARICAFLWRKKWLGQWAKQLCVIRDTRLLCYKSSKDHSPQLDVNLRGSSVVHKEKQVRKKGHKLKITPMNADVIVLGLQSKDQAEQWLRVIQEVSGLPSEGASEGNQYTPDAQRLNCQKPDIAEKYLSAAEYGITINGHPEIPETKDVKKKCSAGLKLSNLMNLGRKKSTSLEPPERSLETSSYLNVLVNSQWKSRWCFVRDSHLHFYQDRNRSKVAQQPLSLVGCDVLPDPSPDHLYSFRILHNGEELAKLEAKSSEEMGHWLGLLLSESGSKTDPEELTYDYVDAERVSCIVSAAKTSLLLMQRKFSEPNTYIDGLPSRDCQDDLYDDVEVSELIAVVEPAEEAAPAVDANSGSEPDRVYLDLTPVKSFLHSSSEAQAQASLPAVPHQDDVAETLTVDPKPGTTPEEPHTESPGDPEVQQRQPEVQESSEPIEPTPRITMVKLQAEQQRISFPANCPDTMASAPIAASPPVKEKLRVTSAEIKLGKNRTEAEVKRYTEEKERLERSKEEIRGHLAQLRREKRELKETLLRCTDKGVLAKLEQTLKKIDEECRMEESRRVDLELSIMEVKDNLKKAEAGPVTLGTTVDTTHLDNMSPRPQPKAATPNPPPDSTPVNSASVLKNRPLSVMVTGKGTVLQKAKEWEKKGAS</sequence>
<comment type="function">
    <text evidence="1">May play a role in a signaling cascade by enhancing the kinase activity of SRC. Contributes to SRC-regulated transcription activation (By similarity).</text>
</comment>
<comment type="subunit">
    <text evidence="1">Interacts with SRC. Interacts with LCK when tyrosine phosphorylated (By similarity).</text>
</comment>
<comment type="subcellular location">
    <subcellularLocation>
        <location evidence="1">Cytoplasm</location>
    </subcellularLocation>
</comment>
<comment type="alternative products">
    <event type="alternative splicing"/>
    <isoform>
        <id>Q5DTU0-1</id>
        <name>1</name>
        <sequence type="displayed"/>
    </isoform>
    <isoform>
        <id>Q5DTU0-2</id>
        <name>2</name>
        <sequence type="described" ref="VSP_014257"/>
    </isoform>
</comment>
<comment type="PTM">
    <text evidence="1">Tyrosine phosphorylated (by SRC).</text>
</comment>
<comment type="sequence caution" evidence="7">
    <conflict type="erroneous initiation">
        <sequence resource="EMBL-CDS" id="AAH31515"/>
    </conflict>
</comment>
<comment type="sequence caution" evidence="7">
    <conflict type="frameshift">
        <sequence resource="EMBL-CDS" id="BAC39879"/>
    </conflict>
</comment>
<comment type="sequence caution" evidence="7">
    <conflict type="erroneous initiation">
        <sequence resource="EMBL-CDS" id="BAD90264"/>
    </conflict>
</comment>
<name>AF1L2_MOUSE</name>
<keyword id="KW-0025">Alternative splicing</keyword>
<keyword id="KW-0175">Coiled coil</keyword>
<keyword id="KW-0963">Cytoplasm</keyword>
<keyword id="KW-0597">Phosphoprotein</keyword>
<keyword id="KW-1185">Reference proteome</keyword>
<keyword id="KW-0677">Repeat</keyword>
<reference key="1">
    <citation type="journal article" date="2005" name="Science">
        <title>The transcriptional landscape of the mammalian genome.</title>
        <authorList>
            <person name="Carninci P."/>
            <person name="Kasukawa T."/>
            <person name="Katayama S."/>
            <person name="Gough J."/>
            <person name="Frith M.C."/>
            <person name="Maeda N."/>
            <person name="Oyama R."/>
            <person name="Ravasi T."/>
            <person name="Lenhard B."/>
            <person name="Wells C."/>
            <person name="Kodzius R."/>
            <person name="Shimokawa K."/>
            <person name="Bajic V.B."/>
            <person name="Brenner S.E."/>
            <person name="Batalov S."/>
            <person name="Forrest A.R."/>
            <person name="Zavolan M."/>
            <person name="Davis M.J."/>
            <person name="Wilming L.G."/>
            <person name="Aidinis V."/>
            <person name="Allen J.E."/>
            <person name="Ambesi-Impiombato A."/>
            <person name="Apweiler R."/>
            <person name="Aturaliya R.N."/>
            <person name="Bailey T.L."/>
            <person name="Bansal M."/>
            <person name="Baxter L."/>
            <person name="Beisel K.W."/>
            <person name="Bersano T."/>
            <person name="Bono H."/>
            <person name="Chalk A.M."/>
            <person name="Chiu K.P."/>
            <person name="Choudhary V."/>
            <person name="Christoffels A."/>
            <person name="Clutterbuck D.R."/>
            <person name="Crowe M.L."/>
            <person name="Dalla E."/>
            <person name="Dalrymple B.P."/>
            <person name="de Bono B."/>
            <person name="Della Gatta G."/>
            <person name="di Bernardo D."/>
            <person name="Down T."/>
            <person name="Engstrom P."/>
            <person name="Fagiolini M."/>
            <person name="Faulkner G."/>
            <person name="Fletcher C.F."/>
            <person name="Fukushima T."/>
            <person name="Furuno M."/>
            <person name="Futaki S."/>
            <person name="Gariboldi M."/>
            <person name="Georgii-Hemming P."/>
            <person name="Gingeras T.R."/>
            <person name="Gojobori T."/>
            <person name="Green R.E."/>
            <person name="Gustincich S."/>
            <person name="Harbers M."/>
            <person name="Hayashi Y."/>
            <person name="Hensch T.K."/>
            <person name="Hirokawa N."/>
            <person name="Hill D."/>
            <person name="Huminiecki L."/>
            <person name="Iacono M."/>
            <person name="Ikeo K."/>
            <person name="Iwama A."/>
            <person name="Ishikawa T."/>
            <person name="Jakt M."/>
            <person name="Kanapin A."/>
            <person name="Katoh M."/>
            <person name="Kawasawa Y."/>
            <person name="Kelso J."/>
            <person name="Kitamura H."/>
            <person name="Kitano H."/>
            <person name="Kollias G."/>
            <person name="Krishnan S.P."/>
            <person name="Kruger A."/>
            <person name="Kummerfeld S.K."/>
            <person name="Kurochkin I.V."/>
            <person name="Lareau L.F."/>
            <person name="Lazarevic D."/>
            <person name="Lipovich L."/>
            <person name="Liu J."/>
            <person name="Liuni S."/>
            <person name="McWilliam S."/>
            <person name="Madan Babu M."/>
            <person name="Madera M."/>
            <person name="Marchionni L."/>
            <person name="Matsuda H."/>
            <person name="Matsuzawa S."/>
            <person name="Miki H."/>
            <person name="Mignone F."/>
            <person name="Miyake S."/>
            <person name="Morris K."/>
            <person name="Mottagui-Tabar S."/>
            <person name="Mulder N."/>
            <person name="Nakano N."/>
            <person name="Nakauchi H."/>
            <person name="Ng P."/>
            <person name="Nilsson R."/>
            <person name="Nishiguchi S."/>
            <person name="Nishikawa S."/>
            <person name="Nori F."/>
            <person name="Ohara O."/>
            <person name="Okazaki Y."/>
            <person name="Orlando V."/>
            <person name="Pang K.C."/>
            <person name="Pavan W.J."/>
            <person name="Pavesi G."/>
            <person name="Pesole G."/>
            <person name="Petrovsky N."/>
            <person name="Piazza S."/>
            <person name="Reed J."/>
            <person name="Reid J.F."/>
            <person name="Ring B.Z."/>
            <person name="Ringwald M."/>
            <person name="Rost B."/>
            <person name="Ruan Y."/>
            <person name="Salzberg S.L."/>
            <person name="Sandelin A."/>
            <person name="Schneider C."/>
            <person name="Schoenbach C."/>
            <person name="Sekiguchi K."/>
            <person name="Semple C.A."/>
            <person name="Seno S."/>
            <person name="Sessa L."/>
            <person name="Sheng Y."/>
            <person name="Shibata Y."/>
            <person name="Shimada H."/>
            <person name="Shimada K."/>
            <person name="Silva D."/>
            <person name="Sinclair B."/>
            <person name="Sperling S."/>
            <person name="Stupka E."/>
            <person name="Sugiura K."/>
            <person name="Sultana R."/>
            <person name="Takenaka Y."/>
            <person name="Taki K."/>
            <person name="Tammoja K."/>
            <person name="Tan S.L."/>
            <person name="Tang S."/>
            <person name="Taylor M.S."/>
            <person name="Tegner J."/>
            <person name="Teichmann S.A."/>
            <person name="Ueda H.R."/>
            <person name="van Nimwegen E."/>
            <person name="Verardo R."/>
            <person name="Wei C.L."/>
            <person name="Yagi K."/>
            <person name="Yamanishi H."/>
            <person name="Zabarovsky E."/>
            <person name="Zhu S."/>
            <person name="Zimmer A."/>
            <person name="Hide W."/>
            <person name="Bult C."/>
            <person name="Grimmond S.M."/>
            <person name="Teasdale R.D."/>
            <person name="Liu E.T."/>
            <person name="Brusic V."/>
            <person name="Quackenbush J."/>
            <person name="Wahlestedt C."/>
            <person name="Mattick J.S."/>
            <person name="Hume D.A."/>
            <person name="Kai C."/>
            <person name="Sasaki D."/>
            <person name="Tomaru Y."/>
            <person name="Fukuda S."/>
            <person name="Kanamori-Katayama M."/>
            <person name="Suzuki M."/>
            <person name="Aoki J."/>
            <person name="Arakawa T."/>
            <person name="Iida J."/>
            <person name="Imamura K."/>
            <person name="Itoh M."/>
            <person name="Kato T."/>
            <person name="Kawaji H."/>
            <person name="Kawagashira N."/>
            <person name="Kawashima T."/>
            <person name="Kojima M."/>
            <person name="Kondo S."/>
            <person name="Konno H."/>
            <person name="Nakano K."/>
            <person name="Ninomiya N."/>
            <person name="Nishio T."/>
            <person name="Okada M."/>
            <person name="Plessy C."/>
            <person name="Shibata K."/>
            <person name="Shiraki T."/>
            <person name="Suzuki S."/>
            <person name="Tagami M."/>
            <person name="Waki K."/>
            <person name="Watahiki A."/>
            <person name="Okamura-Oho Y."/>
            <person name="Suzuki H."/>
            <person name="Kawai J."/>
            <person name="Hayashizaki Y."/>
        </authorList>
    </citation>
    <scope>NUCLEOTIDE SEQUENCE [LARGE SCALE MRNA] (ISOFORM 2)</scope>
    <source>
        <strain>C57BL/6J</strain>
        <tissue>Eye</tissue>
    </source>
</reference>
<reference key="2">
    <citation type="submission" date="2005-02" db="EMBL/GenBank/DDBJ databases">
        <title>Prediction of the coding sequences of mouse homologues of KIAA gene. The complete nucleotide sequences of mouse KIAA-homologous cDNAs identified by screening of terminal sequences of cDNA clones randomly sampled from size-fractionated libraries.</title>
        <authorList>
            <person name="Okazaki N."/>
            <person name="Kikuno R.F."/>
            <person name="Ohara R."/>
            <person name="Inamoto S."/>
            <person name="Nagase T."/>
            <person name="Ohara O."/>
            <person name="Koga H."/>
        </authorList>
    </citation>
    <scope>NUCLEOTIDE SEQUENCE [LARGE SCALE MRNA] (ISOFORM 1)</scope>
    <source>
        <tissue>Fetal brain</tissue>
    </source>
</reference>
<reference key="3">
    <citation type="journal article" date="2004" name="Genome Res.">
        <title>The status, quality, and expansion of the NIH full-length cDNA project: the Mammalian Gene Collection (MGC).</title>
        <authorList>
            <consortium name="The MGC Project Team"/>
        </authorList>
    </citation>
    <scope>NUCLEOTIDE SEQUENCE [LARGE SCALE MRNA] (ISOFORM 2)</scope>
    <source>
        <strain>FVB/N</strain>
        <tissue>Mammary gland</tissue>
    </source>
</reference>
<reference key="4">
    <citation type="journal article" date="2007" name="Proc. Natl. Acad. Sci. U.S.A.">
        <title>Large-scale phosphorylation analysis of mouse liver.</title>
        <authorList>
            <person name="Villen J."/>
            <person name="Beausoleil S.A."/>
            <person name="Gerber S.A."/>
            <person name="Gygi S.P."/>
        </authorList>
    </citation>
    <scope>IDENTIFICATION BY MASS SPECTROMETRY [LARGE SCALE ANALYSIS]</scope>
    <source>
        <tissue>Liver</tissue>
    </source>
</reference>
<reference key="5">
    <citation type="journal article" date="2008" name="J. Proteome Res.">
        <title>Large-scale identification and evolution indexing of tyrosine phosphorylation sites from murine brain.</title>
        <authorList>
            <person name="Ballif B.A."/>
            <person name="Carey G.R."/>
            <person name="Sunyaev S.R."/>
            <person name="Gygi S.P."/>
        </authorList>
    </citation>
    <scope>PHOSPHORYLATION [LARGE SCALE ANALYSIS] AT TYR-56 AND TYR-413</scope>
    <scope>IDENTIFICATION BY MASS SPECTROMETRY [LARGE SCALE ANALYSIS]</scope>
    <source>
        <tissue>Brain</tissue>
    </source>
</reference>
<reference key="6">
    <citation type="journal article" date="2010" name="Cell">
        <title>A tissue-specific atlas of mouse protein phosphorylation and expression.</title>
        <authorList>
            <person name="Huttlin E.L."/>
            <person name="Jedrychowski M.P."/>
            <person name="Elias J.E."/>
            <person name="Goswami T."/>
            <person name="Rad R."/>
            <person name="Beausoleil S.A."/>
            <person name="Villen J."/>
            <person name="Haas W."/>
            <person name="Sowa M.E."/>
            <person name="Gygi S.P."/>
        </authorList>
    </citation>
    <scope>PHOSPHORYLATION [LARGE SCALE ANALYSIS] AT THR-113; SER-408 AND SER-484</scope>
    <scope>IDENTIFICATION BY MASS SPECTROMETRY [LARGE SCALE ANALYSIS]</scope>
    <source>
        <tissue>Brain</tissue>
        <tissue>Brown adipose tissue</tissue>
        <tissue>Heart</tissue>
        <tissue>Kidney</tissue>
        <tissue>Lung</tissue>
        <tissue>Pancreas</tissue>
        <tissue>Spleen</tissue>
    </source>
</reference>